<comment type="function">
    <text evidence="1">Part of a membrane-bound complex that couples electron transfer with translocation of ions across the membrane.</text>
</comment>
<comment type="cofactor">
    <cofactor evidence="1">
        <name>FMN</name>
        <dbReference type="ChEBI" id="CHEBI:58210"/>
    </cofactor>
</comment>
<comment type="subunit">
    <text evidence="1">The complex is composed of six subunits: RnfA, RnfB, RnfC, RnfD, RnfE and RnfG.</text>
</comment>
<comment type="subcellular location">
    <subcellularLocation>
        <location evidence="1">Cell inner membrane</location>
        <topology evidence="1">Multi-pass membrane protein</topology>
    </subcellularLocation>
</comment>
<comment type="similarity">
    <text evidence="1">Belongs to the NqrB/RnfD family.</text>
</comment>
<gene>
    <name evidence="1" type="primary">rnfD</name>
    <name type="ordered locus">VV1189</name>
</gene>
<sequence>MSFFIASSPHAHSRKSTPDLMKWVALCALPGLLAQTYFFGWGTLVQLILAITIALSLEALVMLFRKRPPMRALRDHSALVTAWLLAVAIPPMAPWWIITIGLLFAIVIAKHLYGGLGQNPFNPAMIAYVVLLISFPVQMTSWSAPLPLIEAGHEVAKDPVTFGDLLSLIFTGLTIDGSSLQQVRAGIDGITTATPLDAFKTGLHSGATSSEILSQPIFEGFAGVGWQWVNLAYLAGGLILLKQRVIQWHIPVGFLGALLVMSSFFSLFFPGETASPLFHLLSGATMLGAFFIATDPVSASTTIKGRILFGAIIGTLVFIIRSWGGFPDGVAFAVLLANMCVPLIDYYTKPRTYGH</sequence>
<protein>
    <recommendedName>
        <fullName evidence="1">Ion-translocating oxidoreductase complex subunit D</fullName>
        <ecNumber evidence="1">7.-.-.-</ecNumber>
    </recommendedName>
    <alternativeName>
        <fullName evidence="1">Rnf electron transport complex subunit D</fullName>
    </alternativeName>
</protein>
<feature type="chain" id="PRO_0000074466" description="Ion-translocating oxidoreductase complex subunit D">
    <location>
        <begin position="1"/>
        <end position="355"/>
    </location>
</feature>
<feature type="transmembrane region" description="Helical" evidence="1">
    <location>
        <begin position="23"/>
        <end position="43"/>
    </location>
</feature>
<feature type="transmembrane region" description="Helical" evidence="1">
    <location>
        <begin position="44"/>
        <end position="64"/>
    </location>
</feature>
<feature type="transmembrane region" description="Helical" evidence="1">
    <location>
        <begin position="78"/>
        <end position="109"/>
    </location>
</feature>
<feature type="transmembrane region" description="Helical" evidence="1">
    <location>
        <begin position="129"/>
        <end position="149"/>
    </location>
</feature>
<feature type="transmembrane region" description="Helical" evidence="1">
    <location>
        <begin position="221"/>
        <end position="241"/>
    </location>
</feature>
<feature type="transmembrane region" description="Helical" evidence="1">
    <location>
        <begin position="250"/>
        <end position="270"/>
    </location>
</feature>
<feature type="transmembrane region" description="Helical" evidence="1">
    <location>
        <begin position="273"/>
        <end position="293"/>
    </location>
</feature>
<feature type="transmembrane region" description="Helical" evidence="1">
    <location>
        <begin position="307"/>
        <end position="327"/>
    </location>
</feature>
<feature type="transmembrane region" description="Helical" evidence="1">
    <location>
        <begin position="328"/>
        <end position="348"/>
    </location>
</feature>
<feature type="modified residue" description="FMN phosphoryl threonine" evidence="1">
    <location>
        <position position="194"/>
    </location>
</feature>
<reference key="1">
    <citation type="journal article" date="2003" name="Genome Res.">
        <title>Comparative genome analysis of Vibrio vulnificus, a marine pathogen.</title>
        <authorList>
            <person name="Chen C.-Y."/>
            <person name="Wu K.-M."/>
            <person name="Chang Y.-C."/>
            <person name="Chang C.-H."/>
            <person name="Tsai H.-C."/>
            <person name="Liao T.-L."/>
            <person name="Liu Y.-M."/>
            <person name="Chen H.-J."/>
            <person name="Shen A.B.-T."/>
            <person name="Li J.-C."/>
            <person name="Su T.-L."/>
            <person name="Shao C.-P."/>
            <person name="Lee C.-T."/>
            <person name="Hor L.-I."/>
            <person name="Tsai S.-F."/>
        </authorList>
    </citation>
    <scope>NUCLEOTIDE SEQUENCE [LARGE SCALE GENOMIC DNA]</scope>
    <source>
        <strain>YJ016</strain>
    </source>
</reference>
<keyword id="KW-0997">Cell inner membrane</keyword>
<keyword id="KW-1003">Cell membrane</keyword>
<keyword id="KW-0249">Electron transport</keyword>
<keyword id="KW-0285">Flavoprotein</keyword>
<keyword id="KW-0288">FMN</keyword>
<keyword id="KW-0472">Membrane</keyword>
<keyword id="KW-0597">Phosphoprotein</keyword>
<keyword id="KW-1278">Translocase</keyword>
<keyword id="KW-0812">Transmembrane</keyword>
<keyword id="KW-1133">Transmembrane helix</keyword>
<keyword id="KW-0813">Transport</keyword>
<dbReference type="EC" id="7.-.-.-" evidence="1"/>
<dbReference type="EMBL" id="BA000037">
    <property type="protein sequence ID" value="BAC93953.1"/>
    <property type="molecule type" value="Genomic_DNA"/>
</dbReference>
<dbReference type="SMR" id="Q7MM84"/>
<dbReference type="STRING" id="672.VV93_v1c11090"/>
<dbReference type="KEGG" id="vvy:VV1189"/>
<dbReference type="eggNOG" id="COG4658">
    <property type="taxonomic scope" value="Bacteria"/>
</dbReference>
<dbReference type="HOGENOM" id="CLU_042020_0_0_6"/>
<dbReference type="Proteomes" id="UP000002675">
    <property type="component" value="Chromosome I"/>
</dbReference>
<dbReference type="GO" id="GO:0005886">
    <property type="term" value="C:plasma membrane"/>
    <property type="evidence" value="ECO:0007669"/>
    <property type="project" value="UniProtKB-SubCell"/>
</dbReference>
<dbReference type="GO" id="GO:0022900">
    <property type="term" value="P:electron transport chain"/>
    <property type="evidence" value="ECO:0007669"/>
    <property type="project" value="UniProtKB-UniRule"/>
</dbReference>
<dbReference type="GO" id="GO:0055085">
    <property type="term" value="P:transmembrane transport"/>
    <property type="evidence" value="ECO:0007669"/>
    <property type="project" value="InterPro"/>
</dbReference>
<dbReference type="HAMAP" id="MF_00462">
    <property type="entry name" value="RsxD_RnfD"/>
    <property type="match status" value="1"/>
</dbReference>
<dbReference type="InterPro" id="IPR004338">
    <property type="entry name" value="NqrB/RnfD"/>
</dbReference>
<dbReference type="InterPro" id="IPR011303">
    <property type="entry name" value="RnfD_bac"/>
</dbReference>
<dbReference type="NCBIfam" id="NF002011">
    <property type="entry name" value="PRK00816.1"/>
    <property type="match status" value="1"/>
</dbReference>
<dbReference type="NCBIfam" id="TIGR01946">
    <property type="entry name" value="rnfD"/>
    <property type="match status" value="1"/>
</dbReference>
<dbReference type="PANTHER" id="PTHR30578">
    <property type="entry name" value="ELECTRON TRANSPORT COMPLEX PROTEIN RNFD"/>
    <property type="match status" value="1"/>
</dbReference>
<dbReference type="PANTHER" id="PTHR30578:SF0">
    <property type="entry name" value="ION-TRANSLOCATING OXIDOREDUCTASE COMPLEX SUBUNIT D"/>
    <property type="match status" value="1"/>
</dbReference>
<dbReference type="Pfam" id="PF03116">
    <property type="entry name" value="NQR2_RnfD_RnfE"/>
    <property type="match status" value="1"/>
</dbReference>
<evidence type="ECO:0000255" key="1">
    <source>
        <dbReference type="HAMAP-Rule" id="MF_00462"/>
    </source>
</evidence>
<accession>Q7MM84</accession>
<organism>
    <name type="scientific">Vibrio vulnificus (strain YJ016)</name>
    <dbReference type="NCBI Taxonomy" id="196600"/>
    <lineage>
        <taxon>Bacteria</taxon>
        <taxon>Pseudomonadati</taxon>
        <taxon>Pseudomonadota</taxon>
        <taxon>Gammaproteobacteria</taxon>
        <taxon>Vibrionales</taxon>
        <taxon>Vibrionaceae</taxon>
        <taxon>Vibrio</taxon>
    </lineage>
</organism>
<proteinExistence type="inferred from homology"/>
<name>RNFD_VIBVY</name>